<sequence>MNKIRKGDEVIVVTGKDKGKRGVVLAVGAEHVTVEGINLVKKHVKPNPMKGTTGGVEAKTMPLHISNVALVDANGKASRVGIKVEEGKKVRFLKTTGAVLSA</sequence>
<gene>
    <name evidence="1" type="primary">rplX</name>
    <name type="ordered locus">Bcen2424_0359</name>
</gene>
<name>RL24_BURCH</name>
<accession>A0K3N6</accession>
<comment type="function">
    <text evidence="1">One of two assembly initiator proteins, it binds directly to the 5'-end of the 23S rRNA, where it nucleates assembly of the 50S subunit.</text>
</comment>
<comment type="function">
    <text evidence="1">One of the proteins that surrounds the polypeptide exit tunnel on the outside of the subunit.</text>
</comment>
<comment type="subunit">
    <text evidence="1">Part of the 50S ribosomal subunit.</text>
</comment>
<comment type="similarity">
    <text evidence="1">Belongs to the universal ribosomal protein uL24 family.</text>
</comment>
<organism>
    <name type="scientific">Burkholderia cenocepacia (strain HI2424)</name>
    <dbReference type="NCBI Taxonomy" id="331272"/>
    <lineage>
        <taxon>Bacteria</taxon>
        <taxon>Pseudomonadati</taxon>
        <taxon>Pseudomonadota</taxon>
        <taxon>Betaproteobacteria</taxon>
        <taxon>Burkholderiales</taxon>
        <taxon>Burkholderiaceae</taxon>
        <taxon>Burkholderia</taxon>
        <taxon>Burkholderia cepacia complex</taxon>
    </lineage>
</organism>
<reference key="1">
    <citation type="submission" date="2006-08" db="EMBL/GenBank/DDBJ databases">
        <title>Complete sequence of chromosome 1 of Burkholderia cenocepacia HI2424.</title>
        <authorList>
            <person name="Copeland A."/>
            <person name="Lucas S."/>
            <person name="Lapidus A."/>
            <person name="Barry K."/>
            <person name="Detter J.C."/>
            <person name="Glavina del Rio T."/>
            <person name="Hammon N."/>
            <person name="Israni S."/>
            <person name="Pitluck S."/>
            <person name="Chain P."/>
            <person name="Malfatti S."/>
            <person name="Shin M."/>
            <person name="Vergez L."/>
            <person name="Schmutz J."/>
            <person name="Larimer F."/>
            <person name="Land M."/>
            <person name="Hauser L."/>
            <person name="Kyrpides N."/>
            <person name="Kim E."/>
            <person name="LiPuma J.J."/>
            <person name="Gonzalez C.F."/>
            <person name="Konstantinidis K."/>
            <person name="Tiedje J.M."/>
            <person name="Richardson P."/>
        </authorList>
    </citation>
    <scope>NUCLEOTIDE SEQUENCE [LARGE SCALE GENOMIC DNA]</scope>
    <source>
        <strain>HI2424</strain>
    </source>
</reference>
<proteinExistence type="inferred from homology"/>
<feature type="chain" id="PRO_1000052190" description="Large ribosomal subunit protein uL24">
    <location>
        <begin position="1"/>
        <end position="102"/>
    </location>
</feature>
<protein>
    <recommendedName>
        <fullName evidence="1">Large ribosomal subunit protein uL24</fullName>
    </recommendedName>
    <alternativeName>
        <fullName evidence="2">50S ribosomal protein L24</fullName>
    </alternativeName>
</protein>
<evidence type="ECO:0000255" key="1">
    <source>
        <dbReference type="HAMAP-Rule" id="MF_01326"/>
    </source>
</evidence>
<evidence type="ECO:0000305" key="2"/>
<dbReference type="EMBL" id="CP000458">
    <property type="protein sequence ID" value="ABK07113.1"/>
    <property type="molecule type" value="Genomic_DNA"/>
</dbReference>
<dbReference type="RefSeq" id="WP_006477187.1">
    <property type="nucleotide sequence ID" value="NC_008542.1"/>
</dbReference>
<dbReference type="SMR" id="A0K3N6"/>
<dbReference type="GeneID" id="98107149"/>
<dbReference type="KEGG" id="bch:Bcen2424_0359"/>
<dbReference type="HOGENOM" id="CLU_093315_2_2_4"/>
<dbReference type="GO" id="GO:1990904">
    <property type="term" value="C:ribonucleoprotein complex"/>
    <property type="evidence" value="ECO:0007669"/>
    <property type="project" value="UniProtKB-KW"/>
</dbReference>
<dbReference type="GO" id="GO:0005840">
    <property type="term" value="C:ribosome"/>
    <property type="evidence" value="ECO:0007669"/>
    <property type="project" value="UniProtKB-KW"/>
</dbReference>
<dbReference type="GO" id="GO:0019843">
    <property type="term" value="F:rRNA binding"/>
    <property type="evidence" value="ECO:0007669"/>
    <property type="project" value="UniProtKB-UniRule"/>
</dbReference>
<dbReference type="GO" id="GO:0003735">
    <property type="term" value="F:structural constituent of ribosome"/>
    <property type="evidence" value="ECO:0007669"/>
    <property type="project" value="InterPro"/>
</dbReference>
<dbReference type="GO" id="GO:0006412">
    <property type="term" value="P:translation"/>
    <property type="evidence" value="ECO:0007669"/>
    <property type="project" value="UniProtKB-UniRule"/>
</dbReference>
<dbReference type="CDD" id="cd06089">
    <property type="entry name" value="KOW_RPL26"/>
    <property type="match status" value="1"/>
</dbReference>
<dbReference type="Gene3D" id="2.30.30.30">
    <property type="match status" value="1"/>
</dbReference>
<dbReference type="HAMAP" id="MF_01326_B">
    <property type="entry name" value="Ribosomal_uL24_B"/>
    <property type="match status" value="1"/>
</dbReference>
<dbReference type="InterPro" id="IPR014722">
    <property type="entry name" value="Rib_uL2_dom2"/>
</dbReference>
<dbReference type="InterPro" id="IPR003256">
    <property type="entry name" value="Ribosomal_uL24"/>
</dbReference>
<dbReference type="InterPro" id="IPR005825">
    <property type="entry name" value="Ribosomal_uL24_CS"/>
</dbReference>
<dbReference type="InterPro" id="IPR041988">
    <property type="entry name" value="Ribosomal_uL24_KOW"/>
</dbReference>
<dbReference type="InterPro" id="IPR008991">
    <property type="entry name" value="Translation_prot_SH3-like_sf"/>
</dbReference>
<dbReference type="NCBIfam" id="TIGR01079">
    <property type="entry name" value="rplX_bact"/>
    <property type="match status" value="1"/>
</dbReference>
<dbReference type="PANTHER" id="PTHR12903">
    <property type="entry name" value="MITOCHONDRIAL RIBOSOMAL PROTEIN L24"/>
    <property type="match status" value="1"/>
</dbReference>
<dbReference type="Pfam" id="PF17136">
    <property type="entry name" value="ribosomal_L24"/>
    <property type="match status" value="1"/>
</dbReference>
<dbReference type="SUPFAM" id="SSF50104">
    <property type="entry name" value="Translation proteins SH3-like domain"/>
    <property type="match status" value="1"/>
</dbReference>
<dbReference type="PROSITE" id="PS01108">
    <property type="entry name" value="RIBOSOMAL_L24"/>
    <property type="match status" value="1"/>
</dbReference>
<keyword id="KW-0687">Ribonucleoprotein</keyword>
<keyword id="KW-0689">Ribosomal protein</keyword>
<keyword id="KW-0694">RNA-binding</keyword>
<keyword id="KW-0699">rRNA-binding</keyword>